<sequence length="310" mass="33464">MSENRIRIATRKSPLAMWQAEFVKAELERIHPGIVVELLPMSTKGDVILDTPLAKVGGKGLFVKELEVAMLEDQADIAVHSMKDVPVDFPEGLGLEVICEREDPRDAFVSNIYKSISELPLGATVGTSSLRRQCQLRASRPDLIIKDLRGNVGTRLAKLDNGEYDAIILAAAGLIRLKLSERIASFISAEESLPANGQGAVGIECRTNDERVKALLAPLEHLETRYRVIAERAMNTRLEGGCQVPIGAFAEIDGDEMTLRGLVGNPDGSEIIEGVITGPKTEATQLGVALAEELLSKGAKSILDAVYAKA</sequence>
<keyword id="KW-0627">Porphyrin biosynthesis</keyword>
<keyword id="KW-1185">Reference proteome</keyword>
<keyword id="KW-0808">Transferase</keyword>
<organism>
    <name type="scientific">Shewanella oneidensis (strain ATCC 700550 / JCM 31522 / CIP 106686 / LMG 19005 / NCIMB 14063 / MR-1)</name>
    <dbReference type="NCBI Taxonomy" id="211586"/>
    <lineage>
        <taxon>Bacteria</taxon>
        <taxon>Pseudomonadati</taxon>
        <taxon>Pseudomonadota</taxon>
        <taxon>Gammaproteobacteria</taxon>
        <taxon>Alteromonadales</taxon>
        <taxon>Shewanellaceae</taxon>
        <taxon>Shewanella</taxon>
    </lineage>
</organism>
<accession>Q8E9H0</accession>
<evidence type="ECO:0000255" key="1">
    <source>
        <dbReference type="HAMAP-Rule" id="MF_00260"/>
    </source>
</evidence>
<protein>
    <recommendedName>
        <fullName evidence="1">Porphobilinogen deaminase</fullName>
        <shortName evidence="1">PBG</shortName>
        <ecNumber evidence="1">2.5.1.61</ecNumber>
    </recommendedName>
    <alternativeName>
        <fullName evidence="1">Hydroxymethylbilane synthase</fullName>
        <shortName evidence="1">HMBS</shortName>
    </alternativeName>
    <alternativeName>
        <fullName evidence="1">Pre-uroporphyrinogen synthase</fullName>
    </alternativeName>
</protein>
<name>HEM3_SHEON</name>
<proteinExistence type="inferred from homology"/>
<feature type="chain" id="PRO_0000142986" description="Porphobilinogen deaminase">
    <location>
        <begin position="1"/>
        <end position="310"/>
    </location>
</feature>
<feature type="modified residue" description="S-(dipyrrolylmethanemethyl)cysteine" evidence="1">
    <location>
        <position position="242"/>
    </location>
</feature>
<dbReference type="EC" id="2.5.1.61" evidence="1"/>
<dbReference type="EMBL" id="AE014299">
    <property type="protein sequence ID" value="AAN57282.1"/>
    <property type="molecule type" value="Genomic_DNA"/>
</dbReference>
<dbReference type="RefSeq" id="NP_719838.1">
    <property type="nucleotide sequence ID" value="NC_004347.2"/>
</dbReference>
<dbReference type="RefSeq" id="WP_011073972.1">
    <property type="nucleotide sequence ID" value="NC_004347.2"/>
</dbReference>
<dbReference type="SMR" id="Q8E9H0"/>
<dbReference type="STRING" id="211586.SO_4313"/>
<dbReference type="PaxDb" id="211586-SO_4313"/>
<dbReference type="KEGG" id="son:SO_4313"/>
<dbReference type="PATRIC" id="fig|211586.12.peg.4176"/>
<dbReference type="eggNOG" id="COG0181">
    <property type="taxonomic scope" value="Bacteria"/>
</dbReference>
<dbReference type="HOGENOM" id="CLU_019704_0_2_6"/>
<dbReference type="OrthoDB" id="9810298at2"/>
<dbReference type="PhylomeDB" id="Q8E9H0"/>
<dbReference type="BioCyc" id="SONE211586:G1GMP-3984-MONOMER"/>
<dbReference type="UniPathway" id="UPA00251">
    <property type="reaction ID" value="UER00319"/>
</dbReference>
<dbReference type="Proteomes" id="UP000008186">
    <property type="component" value="Chromosome"/>
</dbReference>
<dbReference type="GO" id="GO:0005737">
    <property type="term" value="C:cytoplasm"/>
    <property type="evidence" value="ECO:0000318"/>
    <property type="project" value="GO_Central"/>
</dbReference>
<dbReference type="GO" id="GO:0004418">
    <property type="term" value="F:hydroxymethylbilane synthase activity"/>
    <property type="evidence" value="ECO:0000318"/>
    <property type="project" value="GO_Central"/>
</dbReference>
<dbReference type="GO" id="GO:0006783">
    <property type="term" value="P:heme biosynthetic process"/>
    <property type="evidence" value="ECO:0000318"/>
    <property type="project" value="GO_Central"/>
</dbReference>
<dbReference type="GO" id="GO:0006782">
    <property type="term" value="P:protoporphyrinogen IX biosynthetic process"/>
    <property type="evidence" value="ECO:0007669"/>
    <property type="project" value="UniProtKB-UniRule"/>
</dbReference>
<dbReference type="CDD" id="cd13646">
    <property type="entry name" value="PBP2_EcHMBS_like"/>
    <property type="match status" value="1"/>
</dbReference>
<dbReference type="FunFam" id="3.30.160.40:FF:000002">
    <property type="entry name" value="Porphobilinogen deaminase"/>
    <property type="match status" value="1"/>
</dbReference>
<dbReference type="FunFam" id="3.40.190.10:FF:000004">
    <property type="entry name" value="Porphobilinogen deaminase"/>
    <property type="match status" value="1"/>
</dbReference>
<dbReference type="FunFam" id="3.40.190.10:FF:000005">
    <property type="entry name" value="Porphobilinogen deaminase"/>
    <property type="match status" value="1"/>
</dbReference>
<dbReference type="Gene3D" id="3.40.190.10">
    <property type="entry name" value="Periplasmic binding protein-like II"/>
    <property type="match status" value="2"/>
</dbReference>
<dbReference type="Gene3D" id="3.30.160.40">
    <property type="entry name" value="Porphobilinogen deaminase, C-terminal domain"/>
    <property type="match status" value="1"/>
</dbReference>
<dbReference type="HAMAP" id="MF_00260">
    <property type="entry name" value="Porphobil_deam"/>
    <property type="match status" value="1"/>
</dbReference>
<dbReference type="InterPro" id="IPR000860">
    <property type="entry name" value="HemC"/>
</dbReference>
<dbReference type="InterPro" id="IPR022419">
    <property type="entry name" value="Porphobilin_deaminase_cofac_BS"/>
</dbReference>
<dbReference type="InterPro" id="IPR022417">
    <property type="entry name" value="Porphobilin_deaminase_N"/>
</dbReference>
<dbReference type="InterPro" id="IPR022418">
    <property type="entry name" value="Porphobilinogen_deaminase_C"/>
</dbReference>
<dbReference type="InterPro" id="IPR036803">
    <property type="entry name" value="Porphobilinogen_deaminase_C_sf"/>
</dbReference>
<dbReference type="NCBIfam" id="TIGR00212">
    <property type="entry name" value="hemC"/>
    <property type="match status" value="1"/>
</dbReference>
<dbReference type="PANTHER" id="PTHR11557">
    <property type="entry name" value="PORPHOBILINOGEN DEAMINASE"/>
    <property type="match status" value="1"/>
</dbReference>
<dbReference type="PANTHER" id="PTHR11557:SF0">
    <property type="entry name" value="PORPHOBILINOGEN DEAMINASE"/>
    <property type="match status" value="1"/>
</dbReference>
<dbReference type="Pfam" id="PF01379">
    <property type="entry name" value="Porphobil_deam"/>
    <property type="match status" value="1"/>
</dbReference>
<dbReference type="Pfam" id="PF03900">
    <property type="entry name" value="Porphobil_deamC"/>
    <property type="match status" value="1"/>
</dbReference>
<dbReference type="PIRSF" id="PIRSF001438">
    <property type="entry name" value="4pyrrol_synth_OHMeBilane_synth"/>
    <property type="match status" value="1"/>
</dbReference>
<dbReference type="PRINTS" id="PR00151">
    <property type="entry name" value="PORPHBDMNASE"/>
</dbReference>
<dbReference type="SUPFAM" id="SSF53850">
    <property type="entry name" value="Periplasmic binding protein-like II"/>
    <property type="match status" value="1"/>
</dbReference>
<dbReference type="SUPFAM" id="SSF54782">
    <property type="entry name" value="Porphobilinogen deaminase (hydroxymethylbilane synthase), C-terminal domain"/>
    <property type="match status" value="1"/>
</dbReference>
<dbReference type="PROSITE" id="PS00533">
    <property type="entry name" value="PORPHOBILINOGEN_DEAM"/>
    <property type="match status" value="1"/>
</dbReference>
<comment type="function">
    <text evidence="1">Tetrapolymerization of the monopyrrole PBG into the hydroxymethylbilane pre-uroporphyrinogen in several discrete steps.</text>
</comment>
<comment type="catalytic activity">
    <reaction evidence="1">
        <text>4 porphobilinogen + H2O = hydroxymethylbilane + 4 NH4(+)</text>
        <dbReference type="Rhea" id="RHEA:13185"/>
        <dbReference type="ChEBI" id="CHEBI:15377"/>
        <dbReference type="ChEBI" id="CHEBI:28938"/>
        <dbReference type="ChEBI" id="CHEBI:57845"/>
        <dbReference type="ChEBI" id="CHEBI:58126"/>
        <dbReference type="EC" id="2.5.1.61"/>
    </reaction>
</comment>
<comment type="cofactor">
    <cofactor evidence="1">
        <name>dipyrromethane</name>
        <dbReference type="ChEBI" id="CHEBI:60342"/>
    </cofactor>
    <text evidence="1">Binds 1 dipyrromethane group covalently.</text>
</comment>
<comment type="pathway">
    <text evidence="1">Porphyrin-containing compound metabolism; protoporphyrin-IX biosynthesis; coproporphyrinogen-III from 5-aminolevulinate: step 2/4.</text>
</comment>
<comment type="subunit">
    <text evidence="1">Monomer.</text>
</comment>
<comment type="miscellaneous">
    <text evidence="1">The porphobilinogen subunits are added to the dipyrromethane group.</text>
</comment>
<comment type="similarity">
    <text evidence="1">Belongs to the HMBS family.</text>
</comment>
<gene>
    <name evidence="1" type="primary">hemC</name>
    <name type="ordered locus">SO_4313</name>
</gene>
<reference key="1">
    <citation type="journal article" date="2002" name="Nat. Biotechnol.">
        <title>Genome sequence of the dissimilatory metal ion-reducing bacterium Shewanella oneidensis.</title>
        <authorList>
            <person name="Heidelberg J.F."/>
            <person name="Paulsen I.T."/>
            <person name="Nelson K.E."/>
            <person name="Gaidos E.J."/>
            <person name="Nelson W.C."/>
            <person name="Read T.D."/>
            <person name="Eisen J.A."/>
            <person name="Seshadri R."/>
            <person name="Ward N.L."/>
            <person name="Methe B.A."/>
            <person name="Clayton R.A."/>
            <person name="Meyer T."/>
            <person name="Tsapin A."/>
            <person name="Scott J."/>
            <person name="Beanan M.J."/>
            <person name="Brinkac L.M."/>
            <person name="Daugherty S.C."/>
            <person name="DeBoy R.T."/>
            <person name="Dodson R.J."/>
            <person name="Durkin A.S."/>
            <person name="Haft D.H."/>
            <person name="Kolonay J.F."/>
            <person name="Madupu R."/>
            <person name="Peterson J.D."/>
            <person name="Umayam L.A."/>
            <person name="White O."/>
            <person name="Wolf A.M."/>
            <person name="Vamathevan J.J."/>
            <person name="Weidman J.F."/>
            <person name="Impraim M."/>
            <person name="Lee K."/>
            <person name="Berry K.J."/>
            <person name="Lee C."/>
            <person name="Mueller J."/>
            <person name="Khouri H.M."/>
            <person name="Gill J."/>
            <person name="Utterback T.R."/>
            <person name="McDonald L.A."/>
            <person name="Feldblyum T.V."/>
            <person name="Smith H.O."/>
            <person name="Venter J.C."/>
            <person name="Nealson K.H."/>
            <person name="Fraser C.M."/>
        </authorList>
    </citation>
    <scope>NUCLEOTIDE SEQUENCE [LARGE SCALE GENOMIC DNA]</scope>
    <source>
        <strain>ATCC 700550 / JCM 31522 / CIP 106686 / LMG 19005 / NCIMB 14063 / MR-1</strain>
    </source>
</reference>